<protein>
    <recommendedName>
        <fullName>Tryptophan aminotransferase-related protein 4</fullName>
        <ecNumber>2.6.1.-</ecNumber>
    </recommendedName>
</protein>
<reference key="1">
    <citation type="journal article" date="2000" name="Nature">
        <title>Sequence and analysis of chromosome 1 of the plant Arabidopsis thaliana.</title>
        <authorList>
            <person name="Theologis A."/>
            <person name="Ecker J.R."/>
            <person name="Palm C.J."/>
            <person name="Federspiel N.A."/>
            <person name="Kaul S."/>
            <person name="White O."/>
            <person name="Alonso J."/>
            <person name="Altafi H."/>
            <person name="Araujo R."/>
            <person name="Bowman C.L."/>
            <person name="Brooks S.Y."/>
            <person name="Buehler E."/>
            <person name="Chan A."/>
            <person name="Chao Q."/>
            <person name="Chen H."/>
            <person name="Cheuk R.F."/>
            <person name="Chin C.W."/>
            <person name="Chung M.K."/>
            <person name="Conn L."/>
            <person name="Conway A.B."/>
            <person name="Conway A.R."/>
            <person name="Creasy T.H."/>
            <person name="Dewar K."/>
            <person name="Dunn P."/>
            <person name="Etgu P."/>
            <person name="Feldblyum T.V."/>
            <person name="Feng J.-D."/>
            <person name="Fong B."/>
            <person name="Fujii C.Y."/>
            <person name="Gill J.E."/>
            <person name="Goldsmith A.D."/>
            <person name="Haas B."/>
            <person name="Hansen N.F."/>
            <person name="Hughes B."/>
            <person name="Huizar L."/>
            <person name="Hunter J.L."/>
            <person name="Jenkins J."/>
            <person name="Johnson-Hopson C."/>
            <person name="Khan S."/>
            <person name="Khaykin E."/>
            <person name="Kim C.J."/>
            <person name="Koo H.L."/>
            <person name="Kremenetskaia I."/>
            <person name="Kurtz D.B."/>
            <person name="Kwan A."/>
            <person name="Lam B."/>
            <person name="Langin-Hooper S."/>
            <person name="Lee A."/>
            <person name="Lee J.M."/>
            <person name="Lenz C.A."/>
            <person name="Li J.H."/>
            <person name="Li Y.-P."/>
            <person name="Lin X."/>
            <person name="Liu S.X."/>
            <person name="Liu Z.A."/>
            <person name="Luros J.S."/>
            <person name="Maiti R."/>
            <person name="Marziali A."/>
            <person name="Militscher J."/>
            <person name="Miranda M."/>
            <person name="Nguyen M."/>
            <person name="Nierman W.C."/>
            <person name="Osborne B.I."/>
            <person name="Pai G."/>
            <person name="Peterson J."/>
            <person name="Pham P.K."/>
            <person name="Rizzo M."/>
            <person name="Rooney T."/>
            <person name="Rowley D."/>
            <person name="Sakano H."/>
            <person name="Salzberg S.L."/>
            <person name="Schwartz J.R."/>
            <person name="Shinn P."/>
            <person name="Southwick A.M."/>
            <person name="Sun H."/>
            <person name="Tallon L.J."/>
            <person name="Tambunga G."/>
            <person name="Toriumi M.J."/>
            <person name="Town C.D."/>
            <person name="Utterback T."/>
            <person name="Van Aken S."/>
            <person name="Vaysberg M."/>
            <person name="Vysotskaia V.S."/>
            <person name="Walker M."/>
            <person name="Wu D."/>
            <person name="Yu G."/>
            <person name="Fraser C.M."/>
            <person name="Venter J.C."/>
            <person name="Davis R.W."/>
        </authorList>
    </citation>
    <scope>NUCLEOTIDE SEQUENCE [LARGE SCALE GENOMIC DNA]</scope>
    <source>
        <strain>cv. Columbia</strain>
    </source>
</reference>
<reference key="2">
    <citation type="journal article" date="2017" name="Plant J.">
        <title>Araport11: a complete reannotation of the Arabidopsis thaliana reference genome.</title>
        <authorList>
            <person name="Cheng C.Y."/>
            <person name="Krishnakumar V."/>
            <person name="Chan A.P."/>
            <person name="Thibaud-Nissen F."/>
            <person name="Schobel S."/>
            <person name="Town C.D."/>
        </authorList>
    </citation>
    <scope>GENOME REANNOTATION</scope>
    <source>
        <strain>cv. Columbia</strain>
    </source>
</reference>
<reference key="3">
    <citation type="journal article" date="2003" name="Science">
        <title>Empirical analysis of transcriptional activity in the Arabidopsis genome.</title>
        <authorList>
            <person name="Yamada K."/>
            <person name="Lim J."/>
            <person name="Dale J.M."/>
            <person name="Chen H."/>
            <person name="Shinn P."/>
            <person name="Palm C.J."/>
            <person name="Southwick A.M."/>
            <person name="Wu H.C."/>
            <person name="Kim C.J."/>
            <person name="Nguyen M."/>
            <person name="Pham P.K."/>
            <person name="Cheuk R.F."/>
            <person name="Karlin-Newmann G."/>
            <person name="Liu S.X."/>
            <person name="Lam B."/>
            <person name="Sakano H."/>
            <person name="Wu T."/>
            <person name="Yu G."/>
            <person name="Miranda M."/>
            <person name="Quach H.L."/>
            <person name="Tripp M."/>
            <person name="Chang C.H."/>
            <person name="Lee J.M."/>
            <person name="Toriumi M.J."/>
            <person name="Chan M.M."/>
            <person name="Tang C.C."/>
            <person name="Onodera C.S."/>
            <person name="Deng J.M."/>
            <person name="Akiyama K."/>
            <person name="Ansari Y."/>
            <person name="Arakawa T."/>
            <person name="Banh J."/>
            <person name="Banno F."/>
            <person name="Bowser L."/>
            <person name="Brooks S.Y."/>
            <person name="Carninci P."/>
            <person name="Chao Q."/>
            <person name="Choy N."/>
            <person name="Enju A."/>
            <person name="Goldsmith A.D."/>
            <person name="Gurjal M."/>
            <person name="Hansen N.F."/>
            <person name="Hayashizaki Y."/>
            <person name="Johnson-Hopson C."/>
            <person name="Hsuan V.W."/>
            <person name="Iida K."/>
            <person name="Karnes M."/>
            <person name="Khan S."/>
            <person name="Koesema E."/>
            <person name="Ishida J."/>
            <person name="Jiang P.X."/>
            <person name="Jones T."/>
            <person name="Kawai J."/>
            <person name="Kamiya A."/>
            <person name="Meyers C."/>
            <person name="Nakajima M."/>
            <person name="Narusaka M."/>
            <person name="Seki M."/>
            <person name="Sakurai T."/>
            <person name="Satou M."/>
            <person name="Tamse R."/>
            <person name="Vaysberg M."/>
            <person name="Wallender E.K."/>
            <person name="Wong C."/>
            <person name="Yamamura Y."/>
            <person name="Yuan S."/>
            <person name="Shinozaki K."/>
            <person name="Davis R.W."/>
            <person name="Theologis A."/>
            <person name="Ecker J.R."/>
        </authorList>
    </citation>
    <scope>NUCLEOTIDE SEQUENCE [LARGE SCALE MRNA]</scope>
    <source>
        <strain>cv. Columbia</strain>
    </source>
</reference>
<reference key="4">
    <citation type="journal article" date="2008" name="Cell">
        <title>TAA1-mediated auxin biosynthesis is essential for hormone crosstalk and plant development.</title>
        <authorList>
            <person name="Stepanova A.N."/>
            <person name="Robertson-Hoyt J."/>
            <person name="Yun J."/>
            <person name="Benavente L.M."/>
            <person name="Xie D.Y."/>
            <person name="Dolezal K."/>
            <person name="Schlereth A."/>
            <person name="Juergens G."/>
            <person name="Alonso J.M."/>
        </authorList>
    </citation>
    <scope>GENE FAMILY</scope>
    <scope>NOMENCLATURE</scope>
</reference>
<reference key="5">
    <citation type="journal article" date="2008" name="Cell">
        <title>Rapid synthesis of auxin via a new tryptophan-dependent pathway is required for shade avoidance in plants.</title>
        <authorList>
            <person name="Tao Y."/>
            <person name="Ferrer J.L."/>
            <person name="Ljung K."/>
            <person name="Pojer F."/>
            <person name="Hong F."/>
            <person name="Long J.A."/>
            <person name="Li L."/>
            <person name="Moreno J.E."/>
            <person name="Bowman M.E."/>
            <person name="Ivans L.J."/>
            <person name="Cheng Y."/>
            <person name="Lim J."/>
            <person name="Zhao Y."/>
            <person name="Ballare C.L."/>
            <person name="Sandberg G."/>
            <person name="Noel J.P."/>
            <person name="Chory J."/>
        </authorList>
    </citation>
    <scope>GENE FAMILY</scope>
    <scope>NOMENCLATURE</scope>
</reference>
<organism>
    <name type="scientific">Arabidopsis thaliana</name>
    <name type="common">Mouse-ear cress</name>
    <dbReference type="NCBI Taxonomy" id="3702"/>
    <lineage>
        <taxon>Eukaryota</taxon>
        <taxon>Viridiplantae</taxon>
        <taxon>Streptophyta</taxon>
        <taxon>Embryophyta</taxon>
        <taxon>Tracheophyta</taxon>
        <taxon>Spermatophyta</taxon>
        <taxon>Magnoliopsida</taxon>
        <taxon>eudicotyledons</taxon>
        <taxon>Gunneridae</taxon>
        <taxon>Pentapetalae</taxon>
        <taxon>rosids</taxon>
        <taxon>malvids</taxon>
        <taxon>Brassicales</taxon>
        <taxon>Brassicaceae</taxon>
        <taxon>Camelineae</taxon>
        <taxon>Arabidopsis</taxon>
    </lineage>
</organism>
<evidence type="ECO:0000250" key="1">
    <source>
        <dbReference type="UniProtKB" id="Q9S7N2"/>
    </source>
</evidence>
<evidence type="ECO:0000255" key="2"/>
<evidence type="ECO:0000305" key="3"/>
<name>TAR4_ARATH</name>
<feature type="chain" id="PRO_0000411677" description="Tryptophan aminotransferase-related protein 4">
    <location>
        <begin position="1"/>
        <end position="463"/>
    </location>
</feature>
<feature type="transmembrane region" description="Helical" evidence="2">
    <location>
        <begin position="6"/>
        <end position="26"/>
    </location>
</feature>
<feature type="binding site" evidence="1">
    <location>
        <position position="124"/>
    </location>
    <ligand>
        <name>pyridoxal 5'-phosphate</name>
        <dbReference type="ChEBI" id="CHEBI:597326"/>
    </ligand>
</feature>
<feature type="binding site" evidence="1">
    <location>
        <begin position="163"/>
        <end position="164"/>
    </location>
    <ligand>
        <name>pyridoxal 5'-phosphate</name>
        <dbReference type="ChEBI" id="CHEBI:597326"/>
    </ligand>
</feature>
<feature type="binding site" evidence="1">
    <location>
        <position position="239"/>
    </location>
    <ligand>
        <name>pyridoxal 5'-phosphate</name>
        <dbReference type="ChEBI" id="CHEBI:597326"/>
    </ligand>
</feature>
<feature type="binding site" evidence="1">
    <location>
        <begin position="259"/>
        <end position="262"/>
    </location>
    <ligand>
        <name>pyridoxal 5'-phosphate</name>
        <dbReference type="ChEBI" id="CHEBI:597326"/>
    </ligand>
</feature>
<feature type="binding site" evidence="1">
    <location>
        <begin position="282"/>
        <end position="285"/>
    </location>
    <ligand>
        <name>pyridoxal 5'-phosphate</name>
        <dbReference type="ChEBI" id="CHEBI:597326"/>
    </ligand>
</feature>
<feature type="binding site" evidence="1">
    <location>
        <position position="293"/>
    </location>
    <ligand>
        <name>pyridoxal 5'-phosphate</name>
        <dbReference type="ChEBI" id="CHEBI:597326"/>
    </ligand>
</feature>
<feature type="modified residue" description="N6-(pyridoxal phosphate)lysine" evidence="2">
    <location>
        <position position="285"/>
    </location>
</feature>
<feature type="sequence conflict" description="In Ref. 3; AAL25576." evidence="3" ref="3">
    <original>F</original>
    <variation>S</variation>
    <location>
        <position position="100"/>
    </location>
</feature>
<accession>Q93Z38</accession>
<accession>Q9FX14</accession>
<proteinExistence type="evidence at transcript level"/>
<gene>
    <name type="primary">TAR4</name>
    <name type="ordered locus">At1g34060</name>
    <name type="ORF">F12G12.12</name>
    <name type="ORF">F12G12.150</name>
</gene>
<comment type="function">
    <text evidence="1">Probable aminotransferase.</text>
</comment>
<comment type="cofactor">
    <cofactor evidence="1">
        <name>pyridoxal 5'-phosphate</name>
        <dbReference type="ChEBI" id="CHEBI:597326"/>
    </cofactor>
</comment>
<comment type="subcellular location">
    <subcellularLocation>
        <location evidence="3">Membrane</location>
        <topology evidence="3">Single-pass membrane protein</topology>
    </subcellularLocation>
</comment>
<comment type="similarity">
    <text evidence="3">Belongs to the alliinase family.</text>
</comment>
<sequence length="463" mass="52430">MMQKKLLLIVSIILNLVFTIHILYYSSTTWNPTWTNRAAAEAETVASFSCSGHGRAFVDGLGVLDGQKPPCECNNCYIGKDCSVLLKDCPVDANSGDPLFLEPFWMRQAERSAILVSGWHRMSYIYEDGTYVSRELEKVIRKLHSVVGNAVTDNRFVIFGSGTTQLLAAAVHALSLTNSSVSSPARLLTSIPYYAMYKDQAEFFDSAHLKFEGNASAWKQSGRNDNITQVIEVVTSPNNPDGKLKRAVLDGPNVKTLHDYAYYWPHFSPITHPVDEDLSLFSLSKTTGHAGSRFGWGLVKDKAIYEKMDRFIRLTSMGVSKETQLHVLQLLKVVVGDGGNEIFSFGYGTVKKRWETLNKIFSMSTRFSLQTIKPEYCNYFKKVREFTPSYAWVKCERPEDTNCYEIFRAAKITGRNGNVFGSEERFVRLSLIRSQDDFDQLIAMLKKLVYHEEDVPSENFMYI</sequence>
<dbReference type="EC" id="2.6.1.-"/>
<dbReference type="EMBL" id="AC015446">
    <property type="protein sequence ID" value="AAG12531.1"/>
    <property type="molecule type" value="Genomic_DNA"/>
</dbReference>
<dbReference type="EMBL" id="CP002684">
    <property type="protein sequence ID" value="AEE31667.1"/>
    <property type="molecule type" value="Genomic_DNA"/>
</dbReference>
<dbReference type="EMBL" id="AY058162">
    <property type="protein sequence ID" value="AAL25576.1"/>
    <property type="molecule type" value="mRNA"/>
</dbReference>
<dbReference type="PIR" id="E86464">
    <property type="entry name" value="E86464"/>
</dbReference>
<dbReference type="RefSeq" id="NP_564435.1">
    <property type="nucleotide sequence ID" value="NM_103128.4"/>
</dbReference>
<dbReference type="SMR" id="Q93Z38"/>
<dbReference type="FunCoup" id="Q93Z38">
    <property type="interactions" value="2"/>
</dbReference>
<dbReference type="STRING" id="3702.Q93Z38"/>
<dbReference type="PaxDb" id="3702-AT1G34060.1"/>
<dbReference type="ProteomicsDB" id="234259"/>
<dbReference type="EnsemblPlants" id="AT1G34060.1">
    <property type="protein sequence ID" value="AT1G34060.1"/>
    <property type="gene ID" value="AT1G34060"/>
</dbReference>
<dbReference type="GeneID" id="840303"/>
<dbReference type="Gramene" id="AT1G34060.1">
    <property type="protein sequence ID" value="AT1G34060.1"/>
    <property type="gene ID" value="AT1G34060"/>
</dbReference>
<dbReference type="KEGG" id="ath:AT1G34060"/>
<dbReference type="Araport" id="AT1G34060"/>
<dbReference type="TAIR" id="AT1G34060">
    <property type="gene designation" value="TAR4"/>
</dbReference>
<dbReference type="eggNOG" id="ENOG502QQJV">
    <property type="taxonomic scope" value="Eukaryota"/>
</dbReference>
<dbReference type="HOGENOM" id="CLU_036760_2_0_1"/>
<dbReference type="InParanoid" id="Q93Z38"/>
<dbReference type="PhylomeDB" id="Q93Z38"/>
<dbReference type="PRO" id="PR:Q93Z38"/>
<dbReference type="Proteomes" id="UP000006548">
    <property type="component" value="Chromosome 1"/>
</dbReference>
<dbReference type="ExpressionAtlas" id="Q93Z38">
    <property type="expression patterns" value="baseline and differential"/>
</dbReference>
<dbReference type="GO" id="GO:0016020">
    <property type="term" value="C:membrane"/>
    <property type="evidence" value="ECO:0007669"/>
    <property type="project" value="UniProtKB-SubCell"/>
</dbReference>
<dbReference type="GO" id="GO:0016846">
    <property type="term" value="F:carbon-sulfur lyase activity"/>
    <property type="evidence" value="ECO:0007669"/>
    <property type="project" value="InterPro"/>
</dbReference>
<dbReference type="GO" id="GO:0008483">
    <property type="term" value="F:transaminase activity"/>
    <property type="evidence" value="ECO:0007669"/>
    <property type="project" value="UniProtKB-KW"/>
</dbReference>
<dbReference type="CDD" id="cd00609">
    <property type="entry name" value="AAT_like"/>
    <property type="match status" value="1"/>
</dbReference>
<dbReference type="Gene3D" id="3.90.1150.10">
    <property type="entry name" value="Aspartate Aminotransferase, domain 1"/>
    <property type="match status" value="1"/>
</dbReference>
<dbReference type="Gene3D" id="2.10.25.30">
    <property type="entry name" value="EGF-like, alliinase"/>
    <property type="match status" value="1"/>
</dbReference>
<dbReference type="Gene3D" id="3.40.640.10">
    <property type="entry name" value="Type I PLP-dependent aspartate aminotransferase-like (Major domain)"/>
    <property type="match status" value="1"/>
</dbReference>
<dbReference type="InterPro" id="IPR006948">
    <property type="entry name" value="Alliinase_C"/>
</dbReference>
<dbReference type="InterPro" id="IPR037029">
    <property type="entry name" value="Alliinase_N_sf"/>
</dbReference>
<dbReference type="InterPro" id="IPR006947">
    <property type="entry name" value="EGF_alliinase"/>
</dbReference>
<dbReference type="InterPro" id="IPR050478">
    <property type="entry name" value="Ethylene_sulfur-biosynth"/>
</dbReference>
<dbReference type="InterPro" id="IPR015424">
    <property type="entry name" value="PyrdxlP-dep_Trfase"/>
</dbReference>
<dbReference type="InterPro" id="IPR015421">
    <property type="entry name" value="PyrdxlP-dep_Trfase_major"/>
</dbReference>
<dbReference type="InterPro" id="IPR015422">
    <property type="entry name" value="PyrdxlP-dep_Trfase_small"/>
</dbReference>
<dbReference type="PANTHER" id="PTHR43795">
    <property type="entry name" value="BIFUNCTIONAL ASPARTATE AMINOTRANSFERASE AND GLUTAMATE/ASPARTATE-PREPHENATE AMINOTRANSFERASE-RELATED"/>
    <property type="match status" value="1"/>
</dbReference>
<dbReference type="PANTHER" id="PTHR43795:SF115">
    <property type="entry name" value="TRYPTOPHAN AMINOTRANSFERASE-RELATED PROTEIN 4"/>
    <property type="match status" value="1"/>
</dbReference>
<dbReference type="Pfam" id="PF04864">
    <property type="entry name" value="Alliinase_C"/>
    <property type="match status" value="1"/>
</dbReference>
<dbReference type="Pfam" id="PF04863">
    <property type="entry name" value="EGF_alliinase"/>
    <property type="match status" value="1"/>
</dbReference>
<dbReference type="SUPFAM" id="SSF53383">
    <property type="entry name" value="PLP-dependent transferases"/>
    <property type="match status" value="1"/>
</dbReference>
<keyword id="KW-0032">Aminotransferase</keyword>
<keyword id="KW-0472">Membrane</keyword>
<keyword id="KW-0663">Pyridoxal phosphate</keyword>
<keyword id="KW-1185">Reference proteome</keyword>
<keyword id="KW-0808">Transferase</keyword>
<keyword id="KW-0812">Transmembrane</keyword>
<keyword id="KW-1133">Transmembrane helix</keyword>